<feature type="chain" id="PRO_0000051738" description="Cytochrome P450 2D14">
    <location>
        <begin position="1"/>
        <end position="500"/>
    </location>
</feature>
<feature type="binding site" description="axial binding residue" evidence="1">
    <location>
        <position position="446"/>
    </location>
    <ligand>
        <name>heme</name>
        <dbReference type="ChEBI" id="CHEBI:30413"/>
    </ligand>
    <ligandPart>
        <name>Fe</name>
        <dbReference type="ChEBI" id="CHEBI:18248"/>
    </ligandPart>
</feature>
<feature type="sequence conflict" description="In Ref. 1; CAA48149." evidence="2" ref="1">
    <original>H</original>
    <variation>R</variation>
    <location>
        <position position="112"/>
    </location>
</feature>
<feature type="sequence conflict" description="In Ref. 1; CAA48501." evidence="2" ref="1">
    <original>R</original>
    <variation>A</variation>
    <location>
        <position position="132"/>
    </location>
</feature>
<feature type="sequence conflict" description="In Ref. 1; CAA48501." evidence="2" ref="1">
    <original>L</original>
    <variation>S</variation>
    <location>
        <position position="163"/>
    </location>
</feature>
<feature type="sequence conflict" description="In Ref. 1; CAA48149." evidence="2" ref="1">
    <original>D</original>
    <variation>G</variation>
    <location>
        <position position="179"/>
    </location>
</feature>
<feature type="sequence conflict" description="In Ref. 1; CAA48501." evidence="2" ref="1">
    <original>F</original>
    <variation>P</variation>
    <location>
        <position position="220"/>
    </location>
</feature>
<feature type="sequence conflict" description="In Ref. 1; CAA48149." evidence="2" ref="1">
    <original>K</original>
    <variation>R</variation>
    <location>
        <position position="248"/>
    </location>
</feature>
<feature type="sequence conflict" description="In Ref. 1; CAA48149." evidence="2" ref="1">
    <original>E</original>
    <variation>G</variation>
    <location>
        <position position="256"/>
    </location>
</feature>
<feature type="sequence conflict" description="In Ref. 1; CAA48149." evidence="2" ref="1">
    <original>R</original>
    <variation>A</variation>
    <location>
        <position position="368"/>
    </location>
</feature>
<feature type="sequence conflict" description="In Ref. 1; CAA48149." evidence="2" ref="1">
    <original>E</original>
    <variation>Q</variation>
    <location>
        <position position="413"/>
    </location>
</feature>
<dbReference type="EC" id="1.14.14.1"/>
<dbReference type="EMBL" id="X68013">
    <property type="protein sequence ID" value="CAA48149.1"/>
    <property type="molecule type" value="mRNA"/>
</dbReference>
<dbReference type="EMBL" id="X68481">
    <property type="protein sequence ID" value="CAA48501.1"/>
    <property type="molecule type" value="mRNA"/>
</dbReference>
<dbReference type="PIR" id="S37284">
    <property type="entry name" value="S37284"/>
</dbReference>
<dbReference type="RefSeq" id="NP_776954.1">
    <property type="nucleotide sequence ID" value="NM_174529.2"/>
</dbReference>
<dbReference type="SMR" id="Q01361"/>
<dbReference type="FunCoup" id="Q01361">
    <property type="interactions" value="151"/>
</dbReference>
<dbReference type="STRING" id="9913.ENSBTAP00000037503"/>
<dbReference type="PaxDb" id="9913-ENSBTAP00000000869"/>
<dbReference type="PeptideAtlas" id="Q01361"/>
<dbReference type="GeneID" id="282211"/>
<dbReference type="KEGG" id="bta:282211"/>
<dbReference type="CTD" id="282211"/>
<dbReference type="VEuPathDB" id="HostDB:ENSBTAG00000026502"/>
<dbReference type="eggNOG" id="KOG0156">
    <property type="taxonomic scope" value="Eukaryota"/>
</dbReference>
<dbReference type="InParanoid" id="Q01361"/>
<dbReference type="OMA" id="RYGHVWK"/>
<dbReference type="OrthoDB" id="3934656at2759"/>
<dbReference type="Reactome" id="R-BTA-211935">
    <property type="pathway name" value="Fatty acids"/>
</dbReference>
<dbReference type="Reactome" id="R-BTA-211958">
    <property type="pathway name" value="Miscellaneous substrates"/>
</dbReference>
<dbReference type="Reactome" id="R-BTA-211981">
    <property type="pathway name" value="Xenobiotics"/>
</dbReference>
<dbReference type="Reactome" id="R-BTA-211999">
    <property type="pathway name" value="CYP2E1 reactions"/>
</dbReference>
<dbReference type="Reactome" id="R-BTA-9027307">
    <property type="pathway name" value="Biosynthesis of maresin-like SPMs"/>
</dbReference>
<dbReference type="Reactome" id="R-BTA-9749641">
    <property type="pathway name" value="Aspirin ADME"/>
</dbReference>
<dbReference type="Proteomes" id="UP000009136">
    <property type="component" value="Chromosome 5"/>
</dbReference>
<dbReference type="Bgee" id="ENSBTAG00000026502">
    <property type="expression patterns" value="Expressed in liver and 103 other cell types or tissues"/>
</dbReference>
<dbReference type="GO" id="GO:0005737">
    <property type="term" value="C:cytoplasm"/>
    <property type="evidence" value="ECO:0000318"/>
    <property type="project" value="GO_Central"/>
</dbReference>
<dbReference type="GO" id="GO:0005789">
    <property type="term" value="C:endoplasmic reticulum membrane"/>
    <property type="evidence" value="ECO:0007669"/>
    <property type="project" value="UniProtKB-SubCell"/>
</dbReference>
<dbReference type="GO" id="GO:0043231">
    <property type="term" value="C:intracellular membrane-bounded organelle"/>
    <property type="evidence" value="ECO:0000318"/>
    <property type="project" value="GO_Central"/>
</dbReference>
<dbReference type="GO" id="GO:0020037">
    <property type="term" value="F:heme binding"/>
    <property type="evidence" value="ECO:0000318"/>
    <property type="project" value="GO_Central"/>
</dbReference>
<dbReference type="GO" id="GO:0005506">
    <property type="term" value="F:iron ion binding"/>
    <property type="evidence" value="ECO:0007669"/>
    <property type="project" value="InterPro"/>
</dbReference>
<dbReference type="GO" id="GO:0016712">
    <property type="term" value="F:oxidoreductase activity, acting on paired donors, with incorporation or reduction of molecular oxygen, reduced flavin or flavoprotein as one donor, and incorporation of one atom of oxygen"/>
    <property type="evidence" value="ECO:0000318"/>
    <property type="project" value="GO_Central"/>
</dbReference>
<dbReference type="GO" id="GO:0019369">
    <property type="term" value="P:arachidonate metabolic process"/>
    <property type="evidence" value="ECO:0000318"/>
    <property type="project" value="GO_Central"/>
</dbReference>
<dbReference type="GO" id="GO:0006805">
    <property type="term" value="P:xenobiotic metabolic process"/>
    <property type="evidence" value="ECO:0000318"/>
    <property type="project" value="GO_Central"/>
</dbReference>
<dbReference type="CDD" id="cd20663">
    <property type="entry name" value="CYP2D"/>
    <property type="match status" value="1"/>
</dbReference>
<dbReference type="FunFam" id="1.10.630.10:FF:000004">
    <property type="entry name" value="cytochrome P450 2D15 isoform X1"/>
    <property type="match status" value="1"/>
</dbReference>
<dbReference type="Gene3D" id="1.10.630.10">
    <property type="entry name" value="Cytochrome P450"/>
    <property type="match status" value="1"/>
</dbReference>
<dbReference type="InterPro" id="IPR001128">
    <property type="entry name" value="Cyt_P450"/>
</dbReference>
<dbReference type="InterPro" id="IPR017972">
    <property type="entry name" value="Cyt_P450_CS"/>
</dbReference>
<dbReference type="InterPro" id="IPR002401">
    <property type="entry name" value="Cyt_P450_E_grp-I"/>
</dbReference>
<dbReference type="InterPro" id="IPR008069">
    <property type="entry name" value="Cyt_P450_E_grp-I_CYP2D-like"/>
</dbReference>
<dbReference type="InterPro" id="IPR036396">
    <property type="entry name" value="Cyt_P450_sf"/>
</dbReference>
<dbReference type="InterPro" id="IPR050182">
    <property type="entry name" value="Cytochrome_P450_fam2"/>
</dbReference>
<dbReference type="PANTHER" id="PTHR24300:SF1">
    <property type="entry name" value="CYTOCHROME P450 2D6-RELATED"/>
    <property type="match status" value="1"/>
</dbReference>
<dbReference type="PANTHER" id="PTHR24300">
    <property type="entry name" value="CYTOCHROME P450 508A4-RELATED"/>
    <property type="match status" value="1"/>
</dbReference>
<dbReference type="Pfam" id="PF00067">
    <property type="entry name" value="p450"/>
    <property type="match status" value="1"/>
</dbReference>
<dbReference type="PRINTS" id="PR00463">
    <property type="entry name" value="EP450I"/>
</dbReference>
<dbReference type="PRINTS" id="PR01686">
    <property type="entry name" value="EP450ICYP2D"/>
</dbReference>
<dbReference type="PRINTS" id="PR00385">
    <property type="entry name" value="P450"/>
</dbReference>
<dbReference type="SUPFAM" id="SSF48264">
    <property type="entry name" value="Cytochrome P450"/>
    <property type="match status" value="1"/>
</dbReference>
<dbReference type="PROSITE" id="PS00086">
    <property type="entry name" value="CYTOCHROME_P450"/>
    <property type="match status" value="1"/>
</dbReference>
<gene>
    <name type="primary">CYP2D14</name>
</gene>
<name>CP2DE_BOVIN</name>
<comment type="function">
    <text>Cytochromes P450 are a group of heme-thiolate monooxygenases. In liver microsomes, this enzyme is involved in an NADPH-dependent electron transport pathway. It oxidizes a variety of structurally unrelated compounds, including steroids, fatty acids, and xenobiotics.</text>
</comment>
<comment type="catalytic activity">
    <reaction>
        <text>an organic molecule + reduced [NADPH--hemoprotein reductase] + O2 = an alcohol + oxidized [NADPH--hemoprotein reductase] + H2O + H(+)</text>
        <dbReference type="Rhea" id="RHEA:17149"/>
        <dbReference type="Rhea" id="RHEA-COMP:11964"/>
        <dbReference type="Rhea" id="RHEA-COMP:11965"/>
        <dbReference type="ChEBI" id="CHEBI:15377"/>
        <dbReference type="ChEBI" id="CHEBI:15378"/>
        <dbReference type="ChEBI" id="CHEBI:15379"/>
        <dbReference type="ChEBI" id="CHEBI:30879"/>
        <dbReference type="ChEBI" id="CHEBI:57618"/>
        <dbReference type="ChEBI" id="CHEBI:58210"/>
        <dbReference type="ChEBI" id="CHEBI:142491"/>
        <dbReference type="EC" id="1.14.14.1"/>
    </reaction>
</comment>
<comment type="cofactor">
    <cofactor evidence="1">
        <name>heme</name>
        <dbReference type="ChEBI" id="CHEBI:30413"/>
    </cofactor>
</comment>
<comment type="subcellular location">
    <subcellularLocation>
        <location>Endoplasmic reticulum membrane</location>
        <topology>Peripheral membrane protein</topology>
    </subcellularLocation>
    <subcellularLocation>
        <location>Microsome membrane</location>
        <topology>Peripheral membrane protein</topology>
    </subcellularLocation>
</comment>
<comment type="induction">
    <text>P450 can be induced to high levels in liver and other tissues by various foreign compounds, including drugs, pesticides, and carcinogens.</text>
</comment>
<comment type="similarity">
    <text evidence="2">Belongs to the cytochrome P450 family.</text>
</comment>
<protein>
    <recommendedName>
        <fullName>Cytochrome P450 2D14</fullName>
        <ecNumber>1.14.14.1</ecNumber>
    </recommendedName>
    <alternativeName>
        <fullName>CYPIID14</fullName>
    </alternativeName>
</protein>
<reference key="1">
    <citation type="journal article" date="1992" name="Eur. J. Biochem.">
        <title>Characterization of the cytochrome P-450IID subfamily in bovine liver. Nucleotide sequences and microheterogeneity.</title>
        <authorList>
            <person name="Tsuneoka Y."/>
            <person name="Matsuo Y."/>
            <person name="Higuchi R."/>
            <person name="Ichikawa Y."/>
        </authorList>
    </citation>
    <scope>NUCLEOTIDE SEQUENCE [MRNA]</scope>
    <source>
        <tissue>Liver</tissue>
    </source>
</reference>
<sequence>MGLLSGDTLGPLAVALLIFLLLLDLMHRRSRWAPRYPPGPTPLPVLGNLLQVDFEDPRPSFNQLRRRFGNVFSLQQVWTPVVVLNGLAAVREALVYRSQDTADRPPPAVYEHLGYGPRAEGVILARYGDAWREQRRFSLTTLRNFGLGKKSLEQWVTEEASCLCAAFADQAGRPFSPMDLLNKAVSNVIASLTFGCRFEYNDPRIIKLLDLTEDGLKEEFNLVRKVVEAVPVLLSIPGLAARVFPAQKAFMALIDELIAEQKMTRDPTQPPRHLTDAFLDEVKEAKGNPESSFNDENLRLVVADLFSAGMVTTSTTLAWALLLMILHPDVQRRVQQEIDEVIGQVRRPEMGDQALMPFTVAVVHEVQRFADIVPLGLPHMTSRDIEVQGFHIPKGTTLITNLSSVLKDETVWEKPFRFHPEHFLDAQGRFVKQEAFIPFSAGRRACLGEPLARMELFLFFTSLLQHFSFSVPAGQPRPSEHGVFAFLVTPAPYQLCAVPR</sequence>
<organism>
    <name type="scientific">Bos taurus</name>
    <name type="common">Bovine</name>
    <dbReference type="NCBI Taxonomy" id="9913"/>
    <lineage>
        <taxon>Eukaryota</taxon>
        <taxon>Metazoa</taxon>
        <taxon>Chordata</taxon>
        <taxon>Craniata</taxon>
        <taxon>Vertebrata</taxon>
        <taxon>Euteleostomi</taxon>
        <taxon>Mammalia</taxon>
        <taxon>Eutheria</taxon>
        <taxon>Laurasiatheria</taxon>
        <taxon>Artiodactyla</taxon>
        <taxon>Ruminantia</taxon>
        <taxon>Pecora</taxon>
        <taxon>Bovidae</taxon>
        <taxon>Bovinae</taxon>
        <taxon>Bos</taxon>
    </lineage>
</organism>
<keyword id="KW-0256">Endoplasmic reticulum</keyword>
<keyword id="KW-0349">Heme</keyword>
<keyword id="KW-0408">Iron</keyword>
<keyword id="KW-0472">Membrane</keyword>
<keyword id="KW-0479">Metal-binding</keyword>
<keyword id="KW-0492">Microsome</keyword>
<keyword id="KW-0503">Monooxygenase</keyword>
<keyword id="KW-0560">Oxidoreductase</keyword>
<keyword id="KW-1185">Reference proteome</keyword>
<proteinExistence type="evidence at transcript level"/>
<accession>Q01361</accession>
<accession>Q29454</accession>
<evidence type="ECO:0000250" key="1"/>
<evidence type="ECO:0000305" key="2"/>